<name>BIOA_MYCTU</name>
<proteinExistence type="evidence at protein level"/>
<keyword id="KW-0002">3D-structure</keyword>
<keyword id="KW-0032">Aminotransferase</keyword>
<keyword id="KW-0093">Biotin biosynthesis</keyword>
<keyword id="KW-0963">Cytoplasm</keyword>
<keyword id="KW-0663">Pyridoxal phosphate</keyword>
<keyword id="KW-1185">Reference proteome</keyword>
<keyword id="KW-0949">S-adenosyl-L-methionine</keyword>
<keyword id="KW-0808">Transferase</keyword>
<protein>
    <recommendedName>
        <fullName evidence="1">Adenosylmethionine-8-amino-7-oxononanoate aminotransferase</fullName>
        <ecNumber evidence="3 4">2.6.1.62</ecNumber>
    </recommendedName>
    <alternativeName>
        <fullName evidence="1">7,8-diamino-pelargonic acid aminotransferase</fullName>
        <shortName evidence="1">DAPA AT</shortName>
        <shortName evidence="1">DAPA aminotransferase</shortName>
    </alternativeName>
    <alternativeName>
        <fullName evidence="1">7,8-diaminononanoate synthase</fullName>
        <shortName evidence="1">DANS</shortName>
    </alternativeName>
    <alternativeName>
        <fullName evidence="5">7,8-diaminopelargonic acid synthase</fullName>
        <shortName evidence="5">DAPAS</shortName>
    </alternativeName>
    <alternativeName>
        <fullName>Diaminopelargonic acid synthase</fullName>
    </alternativeName>
</protein>
<sequence length="437" mass="46319">MAAATGGLTPEQIIAVDGAHLWHPYSSIGREAVSPVVAVAAHGAWLTLIRDGQPIEVLDAMSSWWTAIHGHGHPALDQALTTQLRVMNHVMFGGLTHEPAARLAKLLVDITPAGLDTVFFSDSGSVSVEVAAKMALQYWRGRGLPGKRRLMTWRGGYHGDTFLAMSICDPHGGMHSLWTDVLAAQVFAPQVPRDYDPAYSAAFEAQLAQHAGELAAVVVEPVVQGAGGMRFHDPRYLHDLRDICRRYEVLLIFDEIATGFGRTGALFAADHAGVSPDIMCVGKALTGGYLSLAATLCTADVAHTISAGAAGALMHGPTFMANPLACAVSVASVELLLGQDWRTRITELAAGLTAGLDTARALPAVTDVRVCGAIGVIECDRPVDLAVATPAALDRGVWLRPFRNLVYAMPPYICTPAEITQITSAMVEVARLVGSLP</sequence>
<dbReference type="EC" id="2.6.1.62" evidence="3 4"/>
<dbReference type="EMBL" id="AL123456">
    <property type="protein sequence ID" value="CCP44332.1"/>
    <property type="molecule type" value="Genomic_DNA"/>
</dbReference>
<dbReference type="PIR" id="B70540">
    <property type="entry name" value="B70540"/>
</dbReference>
<dbReference type="RefSeq" id="NP_216084.1">
    <property type="nucleotide sequence ID" value="NC_000962.3"/>
</dbReference>
<dbReference type="RefSeq" id="WP_003407803.1">
    <property type="nucleotide sequence ID" value="NZ_NVQJ01000004.1"/>
</dbReference>
<dbReference type="PDB" id="3BV0">
    <property type="method" value="X-ray"/>
    <property type="resolution" value="2.21 A"/>
    <property type="chains" value="A/B=1-437"/>
</dbReference>
<dbReference type="PDB" id="3LV2">
    <property type="method" value="X-ray"/>
    <property type="resolution" value="2.18 A"/>
    <property type="chains" value="A/B=1-437"/>
</dbReference>
<dbReference type="PDB" id="3TFT">
    <property type="method" value="X-ray"/>
    <property type="resolution" value="1.95 A"/>
    <property type="chains" value="A/B=1-437"/>
</dbReference>
<dbReference type="PDB" id="3TFU">
    <property type="method" value="X-ray"/>
    <property type="resolution" value="1.94 A"/>
    <property type="chains" value="A/B=1-437"/>
</dbReference>
<dbReference type="PDB" id="4CXQ">
    <property type="method" value="X-ray"/>
    <property type="resolution" value="1.80 A"/>
    <property type="chains" value="A/B=1-437"/>
</dbReference>
<dbReference type="PDB" id="4CXR">
    <property type="method" value="X-ray"/>
    <property type="resolution" value="1.70 A"/>
    <property type="chains" value="A/B=1-437"/>
</dbReference>
<dbReference type="PDB" id="4MQP">
    <property type="method" value="X-ray"/>
    <property type="resolution" value="1.83 A"/>
    <property type="chains" value="A/B=1-437"/>
</dbReference>
<dbReference type="PDB" id="4MQQ">
    <property type="method" value="X-ray"/>
    <property type="resolution" value="1.70 A"/>
    <property type="chains" value="A/B=1-437"/>
</dbReference>
<dbReference type="PDB" id="4MQR">
    <property type="method" value="X-ray"/>
    <property type="resolution" value="2.10 A"/>
    <property type="chains" value="A/B=1-437"/>
</dbReference>
<dbReference type="PDB" id="4W1V">
    <property type="method" value="X-ray"/>
    <property type="resolution" value="2.24 A"/>
    <property type="chains" value="A/B=7-435"/>
</dbReference>
<dbReference type="PDB" id="4W1W">
    <property type="method" value="X-ray"/>
    <property type="resolution" value="1.90 A"/>
    <property type="chains" value="A/B=8-436"/>
</dbReference>
<dbReference type="PDB" id="4W1X">
    <property type="method" value="X-ray"/>
    <property type="resolution" value="1.80 A"/>
    <property type="chains" value="A/B=1-437"/>
</dbReference>
<dbReference type="PDB" id="4WYA">
    <property type="method" value="X-ray"/>
    <property type="resolution" value="2.50 A"/>
    <property type="chains" value="A/B/C/D=1-437"/>
</dbReference>
<dbReference type="PDB" id="4WYC">
    <property type="method" value="X-ray"/>
    <property type="resolution" value="1.70 A"/>
    <property type="chains" value="A/B=7-437"/>
</dbReference>
<dbReference type="PDB" id="4WYD">
    <property type="method" value="X-ray"/>
    <property type="resolution" value="1.35 A"/>
    <property type="chains" value="A/B=1-437"/>
</dbReference>
<dbReference type="PDB" id="4WYE">
    <property type="method" value="X-ray"/>
    <property type="resolution" value="1.75 A"/>
    <property type="chains" value="A/B=1-437"/>
</dbReference>
<dbReference type="PDB" id="4WYF">
    <property type="method" value="X-ray"/>
    <property type="resolution" value="2.25 A"/>
    <property type="chains" value="A/B=1-437"/>
</dbReference>
<dbReference type="PDB" id="4WYG">
    <property type="method" value="X-ray"/>
    <property type="resolution" value="1.62 A"/>
    <property type="chains" value="A/B=1-437"/>
</dbReference>
<dbReference type="PDB" id="4XEW">
    <property type="method" value="X-ray"/>
    <property type="resolution" value="2.47 A"/>
    <property type="chains" value="A/B=1-437"/>
</dbReference>
<dbReference type="PDB" id="4XJL">
    <property type="method" value="X-ray"/>
    <property type="resolution" value="1.85 A"/>
    <property type="chains" value="A/B=1-437"/>
</dbReference>
<dbReference type="PDB" id="4XJM">
    <property type="method" value="X-ray"/>
    <property type="resolution" value="1.60 A"/>
    <property type="chains" value="A/B=1-437"/>
</dbReference>
<dbReference type="PDB" id="4XJO">
    <property type="method" value="X-ray"/>
    <property type="resolution" value="1.50 A"/>
    <property type="chains" value="A/B=1-437"/>
</dbReference>
<dbReference type="PDB" id="4XJP">
    <property type="method" value="X-ray"/>
    <property type="resolution" value="1.60 A"/>
    <property type="chains" value="A/B=1-437"/>
</dbReference>
<dbReference type="PDBsum" id="3BV0"/>
<dbReference type="PDBsum" id="3LV2"/>
<dbReference type="PDBsum" id="3TFT"/>
<dbReference type="PDBsum" id="3TFU"/>
<dbReference type="PDBsum" id="4CXQ"/>
<dbReference type="PDBsum" id="4CXR"/>
<dbReference type="PDBsum" id="4MQP"/>
<dbReference type="PDBsum" id="4MQQ"/>
<dbReference type="PDBsum" id="4MQR"/>
<dbReference type="PDBsum" id="4W1V"/>
<dbReference type="PDBsum" id="4W1W"/>
<dbReference type="PDBsum" id="4W1X"/>
<dbReference type="PDBsum" id="4WYA"/>
<dbReference type="PDBsum" id="4WYC"/>
<dbReference type="PDBsum" id="4WYD"/>
<dbReference type="PDBsum" id="4WYE"/>
<dbReference type="PDBsum" id="4WYF"/>
<dbReference type="PDBsum" id="4WYG"/>
<dbReference type="PDBsum" id="4XEW"/>
<dbReference type="PDBsum" id="4XJL"/>
<dbReference type="PDBsum" id="4XJM"/>
<dbReference type="PDBsum" id="4XJO"/>
<dbReference type="PDBsum" id="4XJP"/>
<dbReference type="SMR" id="P9WQ81"/>
<dbReference type="FunCoup" id="P9WQ81">
    <property type="interactions" value="145"/>
</dbReference>
<dbReference type="STRING" id="83332.Rv1568"/>
<dbReference type="ChEMBL" id="CHEMBL2146299"/>
<dbReference type="PaxDb" id="83332-Rv1568"/>
<dbReference type="DNASU" id="886343"/>
<dbReference type="GeneID" id="886343"/>
<dbReference type="KEGG" id="mtu:Rv1568"/>
<dbReference type="KEGG" id="mtv:RVBD_1568"/>
<dbReference type="TubercuList" id="Rv1568"/>
<dbReference type="eggNOG" id="COG0161">
    <property type="taxonomic scope" value="Bacteria"/>
</dbReference>
<dbReference type="InParanoid" id="P9WQ81"/>
<dbReference type="OrthoDB" id="9801052at2"/>
<dbReference type="PhylomeDB" id="P9WQ81"/>
<dbReference type="BRENDA" id="2.6.1.62">
    <property type="organism ID" value="3445"/>
</dbReference>
<dbReference type="SABIO-RK" id="P9WQ81"/>
<dbReference type="UniPathway" id="UPA00078">
    <property type="reaction ID" value="UER00160"/>
</dbReference>
<dbReference type="EvolutionaryTrace" id="P9WQ81"/>
<dbReference type="Proteomes" id="UP000001584">
    <property type="component" value="Chromosome"/>
</dbReference>
<dbReference type="GO" id="GO:0005737">
    <property type="term" value="C:cytoplasm"/>
    <property type="evidence" value="ECO:0007669"/>
    <property type="project" value="UniProtKB-SubCell"/>
</dbReference>
<dbReference type="GO" id="GO:0004015">
    <property type="term" value="F:adenosylmethionine-8-amino-7-oxononanoate transaminase activity"/>
    <property type="evidence" value="ECO:0000314"/>
    <property type="project" value="MTBBASE"/>
</dbReference>
<dbReference type="GO" id="GO:0030170">
    <property type="term" value="F:pyridoxal phosphate binding"/>
    <property type="evidence" value="ECO:0007669"/>
    <property type="project" value="UniProtKB-UniRule"/>
</dbReference>
<dbReference type="GO" id="GO:0009102">
    <property type="term" value="P:biotin biosynthetic process"/>
    <property type="evidence" value="ECO:0000314"/>
    <property type="project" value="MTBBASE"/>
</dbReference>
<dbReference type="CDD" id="cd00610">
    <property type="entry name" value="OAT_like"/>
    <property type="match status" value="1"/>
</dbReference>
<dbReference type="FunFam" id="3.40.640.10:FF:000041">
    <property type="entry name" value="Adenosylmethionine-8-amino-7-oxononanoate aminotransferase"/>
    <property type="match status" value="1"/>
</dbReference>
<dbReference type="Gene3D" id="3.90.1150.10">
    <property type="entry name" value="Aspartate Aminotransferase, domain 1"/>
    <property type="match status" value="1"/>
</dbReference>
<dbReference type="Gene3D" id="3.40.640.10">
    <property type="entry name" value="Type I PLP-dependent aspartate aminotransferase-like (Major domain)"/>
    <property type="match status" value="1"/>
</dbReference>
<dbReference type="HAMAP" id="MF_00834">
    <property type="entry name" value="BioA"/>
    <property type="match status" value="1"/>
</dbReference>
<dbReference type="InterPro" id="IPR005814">
    <property type="entry name" value="Aminotrans_3"/>
</dbReference>
<dbReference type="InterPro" id="IPR049704">
    <property type="entry name" value="Aminotrans_3_PPA_site"/>
</dbReference>
<dbReference type="InterPro" id="IPR005815">
    <property type="entry name" value="BioA"/>
</dbReference>
<dbReference type="InterPro" id="IPR015424">
    <property type="entry name" value="PyrdxlP-dep_Trfase"/>
</dbReference>
<dbReference type="InterPro" id="IPR015421">
    <property type="entry name" value="PyrdxlP-dep_Trfase_major"/>
</dbReference>
<dbReference type="InterPro" id="IPR015422">
    <property type="entry name" value="PyrdxlP-dep_Trfase_small"/>
</dbReference>
<dbReference type="NCBIfam" id="TIGR00508">
    <property type="entry name" value="bioA"/>
    <property type="match status" value="1"/>
</dbReference>
<dbReference type="NCBIfam" id="NF004624">
    <property type="entry name" value="PRK05964.1"/>
    <property type="match status" value="1"/>
</dbReference>
<dbReference type="PANTHER" id="PTHR42684">
    <property type="entry name" value="ADENOSYLMETHIONINE-8-AMINO-7-OXONONANOATE AMINOTRANSFERASE"/>
    <property type="match status" value="1"/>
</dbReference>
<dbReference type="PANTHER" id="PTHR42684:SF17">
    <property type="entry name" value="ADENOSYLMETHIONINE-8-AMINO-7-OXONONANOATE AMINOTRANSFERASE"/>
    <property type="match status" value="1"/>
</dbReference>
<dbReference type="Pfam" id="PF00202">
    <property type="entry name" value="Aminotran_3"/>
    <property type="match status" value="1"/>
</dbReference>
<dbReference type="SUPFAM" id="SSF53383">
    <property type="entry name" value="PLP-dependent transferases"/>
    <property type="match status" value="1"/>
</dbReference>
<dbReference type="PROSITE" id="PS00600">
    <property type="entry name" value="AA_TRANSFER_CLASS_3"/>
    <property type="match status" value="1"/>
</dbReference>
<comment type="function">
    <text evidence="3 4">Catalyzes the reversible transfer of the alpha-amino group from S-adenosyl-L-methionine (SAM) to 7-keto-8-aminopelargonic acid (KAPA) to form 7,8-diaminopelargonic acid (DAPA). It is the only aminotransferase known to utilize SAM as an amino donor (PubMed:16984394, PubMed:20565114). Can also use sinefungin but not S-adenosylhomocysteine as substrate (PubMed:20565114).</text>
</comment>
<comment type="catalytic activity">
    <reaction evidence="1 3 4">
        <text>(8S)-8-amino-7-oxononanoate + S-adenosyl-L-methionine = S-adenosyl-4-methylsulfanyl-2-oxobutanoate + (7R,8S)-7,8-diammoniononanoate</text>
        <dbReference type="Rhea" id="RHEA:16861"/>
        <dbReference type="ChEBI" id="CHEBI:16490"/>
        <dbReference type="ChEBI" id="CHEBI:59789"/>
        <dbReference type="ChEBI" id="CHEBI:149468"/>
        <dbReference type="ChEBI" id="CHEBI:149469"/>
        <dbReference type="EC" id="2.6.1.62"/>
    </reaction>
</comment>
<comment type="cofactor">
    <cofactor evidence="1 3 4">
        <name>pyridoxal 5'-phosphate</name>
        <dbReference type="ChEBI" id="CHEBI:597326"/>
    </cofactor>
</comment>
<comment type="activity regulation">
    <text evidence="3">Competitively inhibited by KAPA at concentrations above 10 uM and by amiclenomycin.</text>
</comment>
<comment type="biophysicochemical properties">
    <kinetics>
        <KM evidence="3">3.8 uM for KAPA (at pH 8.6 and at 37 degrees Celsius)</KM>
        <KM evidence="4">450 uM for SAM (at pH 8.5 at room temperature)</KM>
        <KM evidence="4">700 uM for sinefungin (at pH 8.5 at room temperature)</KM>
        <Vmax evidence="3">22.0 umol/min/mg enzyme (at pH 8.6 and at 37 degrees Celsius)</Vmax>
    </kinetics>
</comment>
<comment type="pathway">
    <text evidence="1">Cofactor biosynthesis; biotin biosynthesis; 7,8-diaminononanoate from 8-amino-7-oxononanoate (SAM route): step 1/1.</text>
</comment>
<comment type="subunit">
    <text evidence="3 4">Homotetramer (PubMed:16984394). Homodimer (PubMed:20565114).</text>
</comment>
<comment type="subcellular location">
    <subcellularLocation>
        <location evidence="1">Cytoplasm</location>
    </subcellularLocation>
</comment>
<comment type="disruption phenotype">
    <text evidence="2">Cells lacking this gene are shown to be highly attenuated in a mouse tuberculosis model.</text>
</comment>
<comment type="miscellaneous">
    <text evidence="3">Catalysis proceeds by a classical ping-pong bi-bi reaction mechanism.</text>
</comment>
<comment type="similarity">
    <text evidence="1 6">Belongs to the class-III pyridoxal-phosphate-dependent aminotransferase family. BioA subfamily.</text>
</comment>
<organism>
    <name type="scientific">Mycobacterium tuberculosis (strain ATCC 25618 / H37Rv)</name>
    <dbReference type="NCBI Taxonomy" id="83332"/>
    <lineage>
        <taxon>Bacteria</taxon>
        <taxon>Bacillati</taxon>
        <taxon>Actinomycetota</taxon>
        <taxon>Actinomycetes</taxon>
        <taxon>Mycobacteriales</taxon>
        <taxon>Mycobacteriaceae</taxon>
        <taxon>Mycobacterium</taxon>
        <taxon>Mycobacterium tuberculosis complex</taxon>
    </lineage>
</organism>
<accession>P9WQ81</accession>
<accession>L0T781</accession>
<accession>O06622</accession>
<accession>P0A4X6</accession>
<gene>
    <name type="primary">bioA</name>
    <name type="ordered locus">Rv1568</name>
    <name type="ORF">MTCY336.35c</name>
</gene>
<evidence type="ECO:0000255" key="1">
    <source>
        <dbReference type="HAMAP-Rule" id="MF_00834"/>
    </source>
</evidence>
<evidence type="ECO:0000269" key="2">
    <source>
    </source>
</evidence>
<evidence type="ECO:0000269" key="3">
    <source>
    </source>
</evidence>
<evidence type="ECO:0000269" key="4">
    <source>
    </source>
</evidence>
<evidence type="ECO:0000303" key="5">
    <source>
    </source>
</evidence>
<evidence type="ECO:0000305" key="6"/>
<evidence type="ECO:0000305" key="7">
    <source>
    </source>
</evidence>
<evidence type="ECO:0007744" key="8">
    <source>
        <dbReference type="PDB" id="3BV0"/>
    </source>
</evidence>
<evidence type="ECO:0007744" key="9">
    <source>
        <dbReference type="PDB" id="3LV2"/>
    </source>
</evidence>
<evidence type="ECO:0007829" key="10">
    <source>
        <dbReference type="PDB" id="4WYD"/>
    </source>
</evidence>
<evidence type="ECO:0007829" key="11">
    <source>
        <dbReference type="PDB" id="4WYF"/>
    </source>
</evidence>
<evidence type="ECO:0007829" key="12">
    <source>
        <dbReference type="PDB" id="4XJM"/>
    </source>
</evidence>
<evidence type="ECO:0007829" key="13">
    <source>
        <dbReference type="PDB" id="4XJO"/>
    </source>
</evidence>
<reference key="1">
    <citation type="journal article" date="1998" name="Nature">
        <title>Deciphering the biology of Mycobacterium tuberculosis from the complete genome sequence.</title>
        <authorList>
            <person name="Cole S.T."/>
            <person name="Brosch R."/>
            <person name="Parkhill J."/>
            <person name="Garnier T."/>
            <person name="Churcher C.M."/>
            <person name="Harris D.E."/>
            <person name="Gordon S.V."/>
            <person name="Eiglmeier K."/>
            <person name="Gas S."/>
            <person name="Barry C.E. III"/>
            <person name="Tekaia F."/>
            <person name="Badcock K."/>
            <person name="Basham D."/>
            <person name="Brown D."/>
            <person name="Chillingworth T."/>
            <person name="Connor R."/>
            <person name="Davies R.M."/>
            <person name="Devlin K."/>
            <person name="Feltwell T."/>
            <person name="Gentles S."/>
            <person name="Hamlin N."/>
            <person name="Holroyd S."/>
            <person name="Hornsby T."/>
            <person name="Jagels K."/>
            <person name="Krogh A."/>
            <person name="McLean J."/>
            <person name="Moule S."/>
            <person name="Murphy L.D."/>
            <person name="Oliver S."/>
            <person name="Osborne J."/>
            <person name="Quail M.A."/>
            <person name="Rajandream M.A."/>
            <person name="Rogers J."/>
            <person name="Rutter S."/>
            <person name="Seeger K."/>
            <person name="Skelton S."/>
            <person name="Squares S."/>
            <person name="Squares R."/>
            <person name="Sulston J.E."/>
            <person name="Taylor K."/>
            <person name="Whitehead S."/>
            <person name="Barrell B.G."/>
        </authorList>
    </citation>
    <scope>NUCLEOTIDE SEQUENCE [LARGE SCALE GENOMIC DNA]</scope>
    <source>
        <strain>ATCC 25618 / H37Rv</strain>
    </source>
</reference>
<reference key="2">
    <citation type="journal article" date="2003" name="Proc. Natl. Acad. Sci. U.S.A.">
        <title>Genetic requirements for mycobacterial survival during infection.</title>
        <authorList>
            <person name="Sassetti C.M."/>
            <person name="Rubin E.J."/>
        </authorList>
    </citation>
    <scope>DISRUPTION PHENOTYPE</scope>
    <source>
        <strain>ATCC 25618 / H37Rv</strain>
    </source>
</reference>
<reference key="3">
    <citation type="journal article" date="2006" name="FEBS J.">
        <title>7,8-Diaminoperlargonic acid aminotransferase from Mycobacterium tuberculosis, a potential therapeutic target. Characterization and inhibition studies.</title>
        <authorList>
            <person name="Mann S."/>
            <person name="Ploux O."/>
        </authorList>
    </citation>
    <scope>FUNCTION AS A ADENOSYLMETHIONINE-8-AMINO-7-OXONONANOATE AMINOTRANSFERASE</scope>
    <scope>CATALYTIC ACTIVITY</scope>
    <scope>COFACTOR</scope>
    <scope>SUBUNIT</scope>
    <scope>ACTIVITY REGULATION</scope>
    <scope>REACTION MECHANISM</scope>
    <scope>BIOPHYSICOCHEMICAL PROPERTIES</scope>
    <source>
        <strain>ATCC 25618 / H37Rv</strain>
    </source>
</reference>
<reference key="4">
    <citation type="journal article" date="2011" name="Mol. Cell. Proteomics">
        <title>Proteogenomic analysis of Mycobacterium tuberculosis by high resolution mass spectrometry.</title>
        <authorList>
            <person name="Kelkar D.S."/>
            <person name="Kumar D."/>
            <person name="Kumar P."/>
            <person name="Balakrishnan L."/>
            <person name="Muthusamy B."/>
            <person name="Yadav A.K."/>
            <person name="Shrivastava P."/>
            <person name="Marimuthu A."/>
            <person name="Anand S."/>
            <person name="Sundaram H."/>
            <person name="Kingsbury R."/>
            <person name="Harsha H.C."/>
            <person name="Nair B."/>
            <person name="Prasad T.S."/>
            <person name="Chauhan D.S."/>
            <person name="Katoch K."/>
            <person name="Katoch V.M."/>
            <person name="Kumar P."/>
            <person name="Chaerkady R."/>
            <person name="Ramachandran S."/>
            <person name="Dash D."/>
            <person name="Pandey A."/>
        </authorList>
    </citation>
    <scope>IDENTIFICATION BY MASS SPECTROMETRY [LARGE SCALE ANALYSIS]</scope>
    <source>
        <strain>ATCC 25618 / H37Rv</strain>
    </source>
</reference>
<reference evidence="8 9" key="5">
    <citation type="journal article" date="2010" name="Biochemistry">
        <title>Structural characterization of the Mycobacterium tuberculosis biotin biosynthesis enzymes 7,8-diaminopelargonic acid synthase and dethiobiotin synthetase.</title>
        <authorList>
            <person name="Dey S."/>
            <person name="Lane J.M."/>
            <person name="Lee R.E."/>
            <person name="Rubin E.J."/>
            <person name="Sacchettini J.C."/>
        </authorList>
    </citation>
    <scope>X-RAY CRYSTALLOGRAPHY (2.2 ANGSTROMS) IN COMPLEX WITH PYRIDOXAL PHOSPHATE AND SUBSTRATE</scope>
    <scope>MUTAGENESIS OF TYR-25</scope>
    <scope>FUNCTION</scope>
    <scope>CATALYTIC ACTIVITY</scope>
    <scope>SUBSTRATE SPECIFICITY</scope>
    <scope>BIOPHYSICOCHEMICAL PROPERTIES</scope>
    <scope>REACTION MECHANISM</scope>
    <scope>SUBUNIT</scope>
    <source>
        <strain>ATCC 25618 / H37Rv</strain>
    </source>
</reference>
<feature type="chain" id="PRO_0000120374" description="Adenosylmethionine-8-amino-7-oxononanoate aminotransferase">
    <location>
        <begin position="1"/>
        <end position="437"/>
    </location>
</feature>
<feature type="binding site" evidence="4">
    <location>
        <position position="64"/>
    </location>
    <ligand>
        <name>S-adenosyl-L-methionine</name>
        <dbReference type="ChEBI" id="CHEBI:59789"/>
        <note>substrate</note>
    </ligand>
</feature>
<feature type="binding site" evidence="1">
    <location>
        <begin position="124"/>
        <end position="125"/>
    </location>
    <ligand>
        <name>pyridoxal 5'-phosphate</name>
        <dbReference type="ChEBI" id="CHEBI:597326"/>
    </ligand>
</feature>
<feature type="binding site" evidence="4">
    <location>
        <position position="157"/>
    </location>
    <ligand>
        <name>S-adenosyl-L-methionine</name>
        <dbReference type="ChEBI" id="CHEBI:59789"/>
        <note>substrate</note>
    </ligand>
</feature>
<feature type="binding site" evidence="1">
    <location>
        <position position="254"/>
    </location>
    <ligand>
        <name>pyridoxal 5'-phosphate</name>
        <dbReference type="ChEBI" id="CHEBI:597326"/>
    </ligand>
</feature>
<feature type="binding site" evidence="1">
    <location>
        <position position="283"/>
    </location>
    <ligand>
        <name>substrate</name>
    </ligand>
</feature>
<feature type="binding site" evidence="4">
    <location>
        <position position="316"/>
    </location>
    <ligand>
        <name>S-adenosyl-L-methionine</name>
        <dbReference type="ChEBI" id="CHEBI:59789"/>
        <note>substrate</note>
    </ligand>
</feature>
<feature type="binding site" evidence="1">
    <location>
        <begin position="317"/>
        <end position="318"/>
    </location>
    <ligand>
        <name>pyridoxal 5'-phosphate</name>
        <dbReference type="ChEBI" id="CHEBI:597326"/>
    </ligand>
</feature>
<feature type="binding site" evidence="7">
    <location>
        <position position="400"/>
    </location>
    <ligand>
        <name>S-adenosyl-L-methionine</name>
        <dbReference type="ChEBI" id="CHEBI:59789"/>
        <note>substrate</note>
    </ligand>
</feature>
<feature type="site" description="Participates in the substrate recognition with KAPA and in a stacking interaction with the adenine ring of SAM" evidence="7">
    <location>
        <position position="25"/>
    </location>
</feature>
<feature type="modified residue" description="N6-(pyridoxal phosphate)lysine" evidence="4 8 9">
    <location>
        <position position="283"/>
    </location>
</feature>
<feature type="mutagenesis site" description="Does not show detectable activity at 335 nm with SAM, even up to concentrations of 3 mM, and shows approximately 70% reduced activity with high concentrations of DAPA (0.5 mM)." evidence="4">
    <original>Y</original>
    <variation>A</variation>
    <location>
        <position position="25"/>
    </location>
</feature>
<feature type="helix" evidence="10">
    <location>
        <begin position="10"/>
        <end position="20"/>
    </location>
</feature>
<feature type="strand" evidence="10">
    <location>
        <begin position="36"/>
        <end position="43"/>
    </location>
</feature>
<feature type="strand" evidence="10">
    <location>
        <begin position="45"/>
        <end position="50"/>
    </location>
</feature>
<feature type="strand" evidence="10">
    <location>
        <begin position="53"/>
        <end position="59"/>
    </location>
</feature>
<feature type="helix" evidence="10">
    <location>
        <begin position="62"/>
        <end position="65"/>
    </location>
</feature>
<feature type="helix" evidence="10">
    <location>
        <begin position="74"/>
        <end position="86"/>
    </location>
</feature>
<feature type="strand" evidence="10">
    <location>
        <begin position="92"/>
        <end position="96"/>
    </location>
</feature>
<feature type="helix" evidence="10">
    <location>
        <begin position="98"/>
        <end position="110"/>
    </location>
</feature>
<feature type="strand" evidence="10">
    <location>
        <begin position="115"/>
        <end position="123"/>
    </location>
</feature>
<feature type="helix" evidence="10">
    <location>
        <begin position="124"/>
        <end position="141"/>
    </location>
</feature>
<feature type="strand" evidence="10">
    <location>
        <begin position="149"/>
        <end position="153"/>
    </location>
</feature>
<feature type="helix" evidence="10">
    <location>
        <begin position="162"/>
        <end position="165"/>
    </location>
</feature>
<feature type="turn" evidence="10">
    <location>
        <begin position="170"/>
        <end position="172"/>
    </location>
</feature>
<feature type="strand" evidence="11">
    <location>
        <begin position="173"/>
        <end position="175"/>
    </location>
</feature>
<feature type="helix" evidence="10">
    <location>
        <begin position="176"/>
        <end position="181"/>
    </location>
</feature>
<feature type="strand" evidence="10">
    <location>
        <begin position="186"/>
        <end position="188"/>
    </location>
</feature>
<feature type="helix" evidence="10">
    <location>
        <begin position="197"/>
        <end position="210"/>
    </location>
</feature>
<feature type="helix" evidence="10">
    <location>
        <begin position="211"/>
        <end position="213"/>
    </location>
</feature>
<feature type="strand" evidence="10">
    <location>
        <begin position="214"/>
        <end position="219"/>
    </location>
</feature>
<feature type="strand" evidence="10">
    <location>
        <begin position="221"/>
        <end position="224"/>
    </location>
</feature>
<feature type="turn" evidence="10">
    <location>
        <begin position="226"/>
        <end position="228"/>
    </location>
</feature>
<feature type="helix" evidence="10">
    <location>
        <begin position="235"/>
        <end position="247"/>
    </location>
</feature>
<feature type="strand" evidence="10">
    <location>
        <begin position="250"/>
        <end position="254"/>
    </location>
</feature>
<feature type="turn" evidence="10">
    <location>
        <begin position="256"/>
        <end position="263"/>
    </location>
</feature>
<feature type="strand" evidence="10">
    <location>
        <begin position="264"/>
        <end position="267"/>
    </location>
</feature>
<feature type="helix" evidence="10">
    <location>
        <begin position="268"/>
        <end position="271"/>
    </location>
</feature>
<feature type="strand" evidence="10">
    <location>
        <begin position="277"/>
        <end position="281"/>
    </location>
</feature>
<feature type="helix" evidence="10">
    <location>
        <begin position="283"/>
        <end position="286"/>
    </location>
</feature>
<feature type="strand" evidence="10">
    <location>
        <begin position="293"/>
        <end position="298"/>
    </location>
</feature>
<feature type="helix" evidence="10">
    <location>
        <begin position="299"/>
        <end position="305"/>
    </location>
</feature>
<feature type="strand" evidence="12">
    <location>
        <begin position="308"/>
        <end position="310"/>
    </location>
</feature>
<feature type="turn" evidence="10">
    <location>
        <begin position="318"/>
        <end position="321"/>
    </location>
</feature>
<feature type="helix" evidence="10">
    <location>
        <begin position="323"/>
        <end position="337"/>
    </location>
</feature>
<feature type="turn" evidence="13">
    <location>
        <begin position="338"/>
        <end position="340"/>
    </location>
</feature>
<feature type="helix" evidence="10">
    <location>
        <begin position="341"/>
        <end position="356"/>
    </location>
</feature>
<feature type="helix" evidence="10">
    <location>
        <begin position="357"/>
        <end position="361"/>
    </location>
</feature>
<feature type="strand" evidence="10">
    <location>
        <begin position="365"/>
        <end position="370"/>
    </location>
</feature>
<feature type="strand" evidence="10">
    <location>
        <begin position="375"/>
        <end position="381"/>
    </location>
</feature>
<feature type="helix" evidence="10">
    <location>
        <begin position="385"/>
        <end position="393"/>
    </location>
</feature>
<feature type="turn" evidence="10">
    <location>
        <begin position="394"/>
        <end position="396"/>
    </location>
</feature>
<feature type="strand" evidence="10">
    <location>
        <begin position="405"/>
        <end position="408"/>
    </location>
</feature>
<feature type="helix" evidence="10">
    <location>
        <begin position="416"/>
        <end position="433"/>
    </location>
</feature>